<protein>
    <recommendedName>
        <fullName evidence="1">Adenosylcobinamide-GDP ribazoletransferase</fullName>
        <ecNumber evidence="1">2.7.8.26</ecNumber>
    </recommendedName>
    <alternativeName>
        <fullName evidence="1">Cobalamin synthase</fullName>
    </alternativeName>
    <alternativeName>
        <fullName evidence="1">Cobalamin-5'-phosphate synthase</fullName>
    </alternativeName>
</protein>
<sequence>MQRNSLIGDTIRSLGFLSRLPLPQRWFEDGDDSLPRNARAFPLAGAVLGLLAGAVLFMAYKVNLPPLACAMLAIGALAAMTGALHEDGLGDTADGFFGASSPDRRLDIMKDSRIGTFAALTLIVFVGLKAALLMTIIDRAGAGYAALALVGCEAASRSGMLAFWHALPSARPGGLSDSVGQPQWETVVCGFGIGLAFLVFTLIPAGGFLSLINALVLATGLLFGFARLCIAKIGGQTGDTLGAAQQIGSVAVLAGLVMAL</sequence>
<gene>
    <name evidence="1" type="primary">cobS</name>
    <name type="ordered locus">Oant_2361</name>
</gene>
<comment type="function">
    <text evidence="1">Joins adenosylcobinamide-GDP and alpha-ribazole to generate adenosylcobalamin (Ado-cobalamin). Also synthesizes adenosylcobalamin 5'-phosphate from adenosylcobinamide-GDP and alpha-ribazole 5'-phosphate.</text>
</comment>
<comment type="catalytic activity">
    <reaction evidence="1">
        <text>alpha-ribazole + adenosylcob(III)inamide-GDP = adenosylcob(III)alamin + GMP + H(+)</text>
        <dbReference type="Rhea" id="RHEA:16049"/>
        <dbReference type="ChEBI" id="CHEBI:10329"/>
        <dbReference type="ChEBI" id="CHEBI:15378"/>
        <dbReference type="ChEBI" id="CHEBI:18408"/>
        <dbReference type="ChEBI" id="CHEBI:58115"/>
        <dbReference type="ChEBI" id="CHEBI:60487"/>
        <dbReference type="EC" id="2.7.8.26"/>
    </reaction>
</comment>
<comment type="catalytic activity">
    <reaction evidence="1">
        <text>alpha-ribazole 5'-phosphate + adenosylcob(III)inamide-GDP = adenosylcob(III)alamin 5'-phosphate + GMP + H(+)</text>
        <dbReference type="Rhea" id="RHEA:23560"/>
        <dbReference type="ChEBI" id="CHEBI:15378"/>
        <dbReference type="ChEBI" id="CHEBI:57918"/>
        <dbReference type="ChEBI" id="CHEBI:58115"/>
        <dbReference type="ChEBI" id="CHEBI:60487"/>
        <dbReference type="ChEBI" id="CHEBI:60493"/>
        <dbReference type="EC" id="2.7.8.26"/>
    </reaction>
</comment>
<comment type="cofactor">
    <cofactor evidence="1">
        <name>Mg(2+)</name>
        <dbReference type="ChEBI" id="CHEBI:18420"/>
    </cofactor>
</comment>
<comment type="pathway">
    <text evidence="1">Cofactor biosynthesis; adenosylcobalamin biosynthesis; adenosylcobalamin from cob(II)yrinate a,c-diamide: step 7/7.</text>
</comment>
<comment type="subcellular location">
    <subcellularLocation>
        <location evidence="1">Cell inner membrane</location>
        <topology evidence="1">Multi-pass membrane protein</topology>
    </subcellularLocation>
</comment>
<comment type="similarity">
    <text evidence="1">Belongs to the CobS family.</text>
</comment>
<reference key="1">
    <citation type="journal article" date="2011" name="J. Bacteriol.">
        <title>Genome of Ochrobactrum anthropi ATCC 49188 T, a versatile opportunistic pathogen and symbiont of several eukaryotic hosts.</title>
        <authorList>
            <person name="Chain P.S."/>
            <person name="Lang D.M."/>
            <person name="Comerci D.J."/>
            <person name="Malfatti S.A."/>
            <person name="Vergez L.M."/>
            <person name="Shin M."/>
            <person name="Ugalde R.A."/>
            <person name="Garcia E."/>
            <person name="Tolmasky M.E."/>
        </authorList>
    </citation>
    <scope>NUCLEOTIDE SEQUENCE [LARGE SCALE GENOMIC DNA]</scope>
    <source>
        <strain>ATCC 49188 / DSM 6882 / CCUG 24695 / JCM 21032 / LMG 3331 / NBRC 15819 / NCTC 12168 / Alc 37</strain>
    </source>
</reference>
<dbReference type="EC" id="2.7.8.26" evidence="1"/>
<dbReference type="EMBL" id="CP000758">
    <property type="protein sequence ID" value="ABS15075.1"/>
    <property type="molecule type" value="Genomic_DNA"/>
</dbReference>
<dbReference type="RefSeq" id="WP_012092223.1">
    <property type="nucleotide sequence ID" value="NC_009667.1"/>
</dbReference>
<dbReference type="STRING" id="439375.Oant_2361"/>
<dbReference type="KEGG" id="oan:Oant_2361"/>
<dbReference type="PATRIC" id="fig|439375.7.peg.2491"/>
<dbReference type="eggNOG" id="COG0368">
    <property type="taxonomic scope" value="Bacteria"/>
</dbReference>
<dbReference type="HOGENOM" id="CLU_057426_1_0_5"/>
<dbReference type="UniPathway" id="UPA00148">
    <property type="reaction ID" value="UER00238"/>
</dbReference>
<dbReference type="Proteomes" id="UP000002301">
    <property type="component" value="Chromosome 1"/>
</dbReference>
<dbReference type="GO" id="GO:0005886">
    <property type="term" value="C:plasma membrane"/>
    <property type="evidence" value="ECO:0007669"/>
    <property type="project" value="UniProtKB-SubCell"/>
</dbReference>
<dbReference type="GO" id="GO:0051073">
    <property type="term" value="F:adenosylcobinamide-GDP ribazoletransferase activity"/>
    <property type="evidence" value="ECO:0007669"/>
    <property type="project" value="UniProtKB-UniRule"/>
</dbReference>
<dbReference type="GO" id="GO:0008818">
    <property type="term" value="F:cobalamin 5'-phosphate synthase activity"/>
    <property type="evidence" value="ECO:0007669"/>
    <property type="project" value="UniProtKB-UniRule"/>
</dbReference>
<dbReference type="GO" id="GO:0009236">
    <property type="term" value="P:cobalamin biosynthetic process"/>
    <property type="evidence" value="ECO:0007669"/>
    <property type="project" value="UniProtKB-UniRule"/>
</dbReference>
<dbReference type="HAMAP" id="MF_00719">
    <property type="entry name" value="CobS"/>
    <property type="match status" value="1"/>
</dbReference>
<dbReference type="InterPro" id="IPR003805">
    <property type="entry name" value="CobS"/>
</dbReference>
<dbReference type="NCBIfam" id="TIGR00317">
    <property type="entry name" value="cobS"/>
    <property type="match status" value="1"/>
</dbReference>
<dbReference type="NCBIfam" id="NF001276">
    <property type="entry name" value="PRK00235.1-2"/>
    <property type="match status" value="1"/>
</dbReference>
<dbReference type="PANTHER" id="PTHR34148">
    <property type="entry name" value="ADENOSYLCOBINAMIDE-GDP RIBAZOLETRANSFERASE"/>
    <property type="match status" value="1"/>
</dbReference>
<dbReference type="PANTHER" id="PTHR34148:SF1">
    <property type="entry name" value="ADENOSYLCOBINAMIDE-GDP RIBAZOLETRANSFERASE"/>
    <property type="match status" value="1"/>
</dbReference>
<dbReference type="Pfam" id="PF02654">
    <property type="entry name" value="CobS"/>
    <property type="match status" value="1"/>
</dbReference>
<evidence type="ECO:0000255" key="1">
    <source>
        <dbReference type="HAMAP-Rule" id="MF_00719"/>
    </source>
</evidence>
<proteinExistence type="inferred from homology"/>
<feature type="chain" id="PRO_1000045786" description="Adenosylcobinamide-GDP ribazoletransferase">
    <location>
        <begin position="1"/>
        <end position="260"/>
    </location>
</feature>
<feature type="transmembrane region" description="Helical" evidence="1">
    <location>
        <begin position="40"/>
        <end position="60"/>
    </location>
</feature>
<feature type="transmembrane region" description="Helical" evidence="1">
    <location>
        <begin position="64"/>
        <end position="84"/>
    </location>
</feature>
<feature type="transmembrane region" description="Helical" evidence="1">
    <location>
        <begin position="117"/>
        <end position="137"/>
    </location>
</feature>
<feature type="transmembrane region" description="Helical" evidence="1">
    <location>
        <begin position="192"/>
        <end position="212"/>
    </location>
</feature>
<feature type="transmembrane region" description="Helical" evidence="1">
    <location>
        <begin position="214"/>
        <end position="234"/>
    </location>
</feature>
<feature type="transmembrane region" description="Helical" evidence="1">
    <location>
        <begin position="240"/>
        <end position="260"/>
    </location>
</feature>
<name>COBS_BRUA4</name>
<accession>A6X1H1</accession>
<organism>
    <name type="scientific">Brucella anthropi (strain ATCC 49188 / DSM 6882 / CCUG 24695 / JCM 21032 / LMG 3331 / NBRC 15819 / NCTC 12168 / Alc 37)</name>
    <name type="common">Ochrobactrum anthropi</name>
    <dbReference type="NCBI Taxonomy" id="439375"/>
    <lineage>
        <taxon>Bacteria</taxon>
        <taxon>Pseudomonadati</taxon>
        <taxon>Pseudomonadota</taxon>
        <taxon>Alphaproteobacteria</taxon>
        <taxon>Hyphomicrobiales</taxon>
        <taxon>Brucellaceae</taxon>
        <taxon>Brucella/Ochrobactrum group</taxon>
        <taxon>Brucella</taxon>
    </lineage>
</organism>
<keyword id="KW-0997">Cell inner membrane</keyword>
<keyword id="KW-1003">Cell membrane</keyword>
<keyword id="KW-0169">Cobalamin biosynthesis</keyword>
<keyword id="KW-0460">Magnesium</keyword>
<keyword id="KW-0472">Membrane</keyword>
<keyword id="KW-1185">Reference proteome</keyword>
<keyword id="KW-0808">Transferase</keyword>
<keyword id="KW-0812">Transmembrane</keyword>
<keyword id="KW-1133">Transmembrane helix</keyword>